<feature type="chain" id="PRO_0000280221" description="Dextransucrase 2">
    <location>
        <begin position="1"/>
        <end position="5" status="greater than"/>
    </location>
</feature>
<feature type="non-terminal residue" evidence="3">
    <location>
        <position position="5"/>
    </location>
</feature>
<sequence length="5" mass="599">DSTNY</sequence>
<gene>
    <name type="primary">dsrF</name>
</gene>
<accession>P85089</accession>
<organism>
    <name type="scientific">Leuconostoc mesenteroides</name>
    <dbReference type="NCBI Taxonomy" id="1245"/>
    <lineage>
        <taxon>Bacteria</taxon>
        <taxon>Bacillati</taxon>
        <taxon>Bacillota</taxon>
        <taxon>Bacilli</taxon>
        <taxon>Lactobacillales</taxon>
        <taxon>Lactobacillaceae</taxon>
        <taxon>Leuconostoc</taxon>
    </lineage>
</organism>
<keyword id="KW-0903">Direct protein sequencing</keyword>
<keyword id="KW-0328">Glycosyltransferase</keyword>
<keyword id="KW-0808">Transferase</keyword>
<protein>
    <recommendedName>
        <fullName>Dextransucrase 2</fullName>
        <ecNumber>2.4.1.5</ecNumber>
    </recommendedName>
    <alternativeName>
        <fullName>Dextransucrase DsrF</fullName>
    </alternativeName>
    <alternativeName>
        <fullName>Glucansucrase 2</fullName>
    </alternativeName>
    <alternativeName>
        <fullName>Sucrose 6-glucosyltransferase 2</fullName>
    </alternativeName>
</protein>
<proteinExistence type="evidence at protein level"/>
<comment type="function">
    <text evidence="2">Involved in the production of dextran, an extracellular glucan polymer.</text>
</comment>
<comment type="catalytic activity">
    <reaction evidence="2">
        <text>[(1-&gt;6)-alpha-D-glucosyl](n) + sucrose = [(1-&gt;6)-alpha-D-glucosyl](n+1) + D-fructose</text>
        <dbReference type="Rhea" id="RHEA:18825"/>
        <dbReference type="Rhea" id="RHEA-COMP:11144"/>
        <dbReference type="Rhea" id="RHEA-COMP:11145"/>
        <dbReference type="ChEBI" id="CHEBI:17992"/>
        <dbReference type="ChEBI" id="CHEBI:18269"/>
        <dbReference type="ChEBI" id="CHEBI:37721"/>
        <dbReference type="EC" id="2.4.1.5"/>
    </reaction>
</comment>
<comment type="miscellaneous">
    <text>The dextran produced by Leuconostoc mesenteroides CMG713 has a molecular mass of about 2000 kDa and contains exclusively alpha-(1-&gt;6) glycosidic linkages in the main chain.</text>
</comment>
<comment type="similarity">
    <text evidence="1">Belongs to the glycosyl hydrolase 70 family.</text>
</comment>
<evidence type="ECO:0000255" key="1"/>
<evidence type="ECO:0000269" key="2">
    <source ref="1"/>
</evidence>
<evidence type="ECO:0000303" key="3">
    <source ref="1"/>
</evidence>
<evidence type="ECO:0000305" key="4"/>
<name>GTF2_LEUME</name>
<dbReference type="EC" id="2.4.1.5"/>
<dbReference type="BRENDA" id="2.4.1.5">
    <property type="organism ID" value="839"/>
</dbReference>
<dbReference type="GO" id="GO:0047849">
    <property type="term" value="F:dextransucrase activity"/>
    <property type="evidence" value="ECO:0007669"/>
    <property type="project" value="UniProtKB-EC"/>
</dbReference>
<reference evidence="4" key="1">
    <citation type="submission" date="2007-01" db="UniProtKB">
        <title>Molecular characterization of dextransucrase from Leuconostoc mesenteroides CMG713.</title>
        <authorList>
            <person name="Sarwat F."/>
            <person name="Aman A."/>
            <person name="Qader S.A."/>
            <person name="Ahmed N."/>
        </authorList>
    </citation>
    <scope>PROTEIN SEQUENCE</scope>
    <scope>FUNCTION</scope>
    <scope>CATALYTIC ACTIVITY</scope>
    <source>
        <strain evidence="2">CMG713</strain>
    </source>
</reference>
<reference key="2">
    <citation type="journal article" date="2008" name="Int. J. Biol. Sci.">
        <title>Production &amp; characterization of a unique dextran from an indigenous Leuconostoc mesenteroides CMG713.</title>
        <authorList>
            <person name="Sarwat F."/>
            <person name="Ul Qader S.A."/>
            <person name="Aman A."/>
            <person name="Ahmed N."/>
        </authorList>
    </citation>
    <scope>CHARACTERISTICS OF DEXTRAN</scope>
    <source>
        <strain>CMG713</strain>
    </source>
</reference>